<evidence type="ECO:0000255" key="1"/>
<evidence type="ECO:0000255" key="2">
    <source>
        <dbReference type="PROSITE-ProRule" id="PRU00806"/>
    </source>
</evidence>
<evidence type="ECO:0000305" key="3"/>
<protein>
    <recommendedName>
        <fullName>Cysteine-rich repeat secretory protein 8</fullName>
    </recommendedName>
</protein>
<comment type="subcellular location">
    <subcellularLocation>
        <location evidence="3">Secreted</location>
    </subcellularLocation>
</comment>
<comment type="similarity">
    <text evidence="3">Belongs to the cysteine-rich repeat secretory protein family.</text>
</comment>
<comment type="sequence caution" evidence="3">
    <conflict type="erroneous initiation">
        <sequence resource="EMBL-CDS" id="AAR20768"/>
    </conflict>
    <text>Truncated N-terminus.</text>
</comment>
<comment type="sequence caution" evidence="3">
    <conflict type="erroneous initiation">
        <sequence resource="EMBL-CDS" id="AAR24761"/>
    </conflict>
    <text>Truncated N-terminus.</text>
</comment>
<feature type="signal peptide" evidence="1">
    <location>
        <begin position="1"/>
        <end position="27"/>
    </location>
</feature>
<feature type="chain" id="PRO_0000296136" description="Cysteine-rich repeat secretory protein 8">
    <location>
        <begin position="28"/>
        <end position="284"/>
    </location>
</feature>
<feature type="domain" description="Gnk2-homologous 1" evidence="2">
    <location>
        <begin position="32"/>
        <end position="136"/>
    </location>
</feature>
<feature type="domain" description="Gnk2-homologous 2" evidence="2">
    <location>
        <begin position="151"/>
        <end position="259"/>
    </location>
</feature>
<proteinExistence type="evidence at transcript level"/>
<reference key="1">
    <citation type="journal article" date="2000" name="Nature">
        <title>Sequence and analysis of chromosome 1 of the plant Arabidopsis thaliana.</title>
        <authorList>
            <person name="Theologis A."/>
            <person name="Ecker J.R."/>
            <person name="Palm C.J."/>
            <person name="Federspiel N.A."/>
            <person name="Kaul S."/>
            <person name="White O."/>
            <person name="Alonso J."/>
            <person name="Altafi H."/>
            <person name="Araujo R."/>
            <person name="Bowman C.L."/>
            <person name="Brooks S.Y."/>
            <person name="Buehler E."/>
            <person name="Chan A."/>
            <person name="Chao Q."/>
            <person name="Chen H."/>
            <person name="Cheuk R.F."/>
            <person name="Chin C.W."/>
            <person name="Chung M.K."/>
            <person name="Conn L."/>
            <person name="Conway A.B."/>
            <person name="Conway A.R."/>
            <person name="Creasy T.H."/>
            <person name="Dewar K."/>
            <person name="Dunn P."/>
            <person name="Etgu P."/>
            <person name="Feldblyum T.V."/>
            <person name="Feng J.-D."/>
            <person name="Fong B."/>
            <person name="Fujii C.Y."/>
            <person name="Gill J.E."/>
            <person name="Goldsmith A.D."/>
            <person name="Haas B."/>
            <person name="Hansen N.F."/>
            <person name="Hughes B."/>
            <person name="Huizar L."/>
            <person name="Hunter J.L."/>
            <person name="Jenkins J."/>
            <person name="Johnson-Hopson C."/>
            <person name="Khan S."/>
            <person name="Khaykin E."/>
            <person name="Kim C.J."/>
            <person name="Koo H.L."/>
            <person name="Kremenetskaia I."/>
            <person name="Kurtz D.B."/>
            <person name="Kwan A."/>
            <person name="Lam B."/>
            <person name="Langin-Hooper S."/>
            <person name="Lee A."/>
            <person name="Lee J.M."/>
            <person name="Lenz C.A."/>
            <person name="Li J.H."/>
            <person name="Li Y.-P."/>
            <person name="Lin X."/>
            <person name="Liu S.X."/>
            <person name="Liu Z.A."/>
            <person name="Luros J.S."/>
            <person name="Maiti R."/>
            <person name="Marziali A."/>
            <person name="Militscher J."/>
            <person name="Miranda M."/>
            <person name="Nguyen M."/>
            <person name="Nierman W.C."/>
            <person name="Osborne B.I."/>
            <person name="Pai G."/>
            <person name="Peterson J."/>
            <person name="Pham P.K."/>
            <person name="Rizzo M."/>
            <person name="Rooney T."/>
            <person name="Rowley D."/>
            <person name="Sakano H."/>
            <person name="Salzberg S.L."/>
            <person name="Schwartz J.R."/>
            <person name="Shinn P."/>
            <person name="Southwick A.M."/>
            <person name="Sun H."/>
            <person name="Tallon L.J."/>
            <person name="Tambunga G."/>
            <person name="Toriumi M.J."/>
            <person name="Town C.D."/>
            <person name="Utterback T."/>
            <person name="Van Aken S."/>
            <person name="Vaysberg M."/>
            <person name="Vysotskaia V.S."/>
            <person name="Walker M."/>
            <person name="Wu D."/>
            <person name="Yu G."/>
            <person name="Fraser C.M."/>
            <person name="Venter J.C."/>
            <person name="Davis R.W."/>
        </authorList>
    </citation>
    <scope>NUCLEOTIDE SEQUENCE [LARGE SCALE GENOMIC DNA]</scope>
    <source>
        <strain>cv. Columbia</strain>
    </source>
</reference>
<reference key="2">
    <citation type="journal article" date="2017" name="Plant J.">
        <title>Araport11: a complete reannotation of the Arabidopsis thaliana reference genome.</title>
        <authorList>
            <person name="Cheng C.Y."/>
            <person name="Krishnakumar V."/>
            <person name="Chan A.P."/>
            <person name="Thibaud-Nissen F."/>
            <person name="Schobel S."/>
            <person name="Town C.D."/>
        </authorList>
    </citation>
    <scope>GENOME REANNOTATION</scope>
    <source>
        <strain>cv. Columbia</strain>
    </source>
</reference>
<reference key="3">
    <citation type="submission" date="2003-12" db="EMBL/GenBank/DDBJ databases">
        <title>Arabidopsis cDNA clones.</title>
        <authorList>
            <person name="Shinn P."/>
            <person name="Chen H."/>
            <person name="Cheuk R.F."/>
            <person name="Kim C.J."/>
            <person name="Ecker J.R."/>
        </authorList>
    </citation>
    <scope>NUCLEOTIDE SEQUENCE [LARGE SCALE MRNA] OF 4-284</scope>
    <source>
        <strain>cv. Columbia</strain>
    </source>
</reference>
<reference key="4">
    <citation type="journal article" date="2001" name="Plant Physiol.">
        <title>A superfamily of proteins with novel cysteine-rich repeats.</title>
        <authorList>
            <person name="Chen Z."/>
        </authorList>
    </citation>
    <scope>GENE FAMILY ORGANIZATION</scope>
    <scope>NOMENCLATURE</scope>
</reference>
<sequence length="284" mass="31540">MATFIRFTAPLFCFFFLFSLFSHQTMSQPQHMATFCDDRLSDNFTQTSSYKANRETLLSSLRDRSSLGTYSNATIGLSPDTVYGMFLCRGDLTKTSCSDCVKTATLEITKNNNCTSRKTALIFYEECMVRYSNVSFFTLVELDGPYVAKYSLATFPTSLFSSFQQTLSNKVEQLIILIASKSSLSASTPYYVKDISRVNELEGSYTLDTVVQCSPDLDPANCGVCLRLVVKGLSGCCTNARFAQFYLSKCFLKYDTTGLPTSQSPSGSSSINVMKGEHNICPRL</sequence>
<organism>
    <name type="scientific">Arabidopsis thaliana</name>
    <name type="common">Mouse-ear cress</name>
    <dbReference type="NCBI Taxonomy" id="3702"/>
    <lineage>
        <taxon>Eukaryota</taxon>
        <taxon>Viridiplantae</taxon>
        <taxon>Streptophyta</taxon>
        <taxon>Embryophyta</taxon>
        <taxon>Tracheophyta</taxon>
        <taxon>Spermatophyta</taxon>
        <taxon>Magnoliopsida</taxon>
        <taxon>eudicotyledons</taxon>
        <taxon>Gunneridae</taxon>
        <taxon>Pentapetalae</taxon>
        <taxon>rosids</taxon>
        <taxon>malvids</taxon>
        <taxon>Brassicales</taxon>
        <taxon>Brassicaceae</taxon>
        <taxon>Camelineae</taxon>
        <taxon>Arabidopsis</taxon>
    </lineage>
</organism>
<gene>
    <name type="primary">CRRSP8</name>
    <name type="ordered locus">At1g63560</name>
    <name type="ORF">F2K11.8</name>
</gene>
<name>CRRS8_ARATH</name>
<dbReference type="EMBL" id="AC008047">
    <property type="protein sequence ID" value="AAF19715.1"/>
    <property type="molecule type" value="Genomic_DNA"/>
</dbReference>
<dbReference type="EMBL" id="CP002684">
    <property type="status" value="NOT_ANNOTATED_CDS"/>
    <property type="molecule type" value="Genomic_DNA"/>
</dbReference>
<dbReference type="EMBL" id="BT010711">
    <property type="protein sequence ID" value="AAR20768.2"/>
    <property type="status" value="ALT_INIT"/>
    <property type="molecule type" value="mRNA"/>
</dbReference>
<dbReference type="EMBL" id="BT010983">
    <property type="protein sequence ID" value="AAR24761.1"/>
    <property type="status" value="ALT_INIT"/>
    <property type="molecule type" value="mRNA"/>
</dbReference>
<dbReference type="PIR" id="G96660">
    <property type="entry name" value="G96660"/>
</dbReference>
<dbReference type="SMR" id="Q9SH40"/>
<dbReference type="PaxDb" id="3702-AT1G63560.1"/>
<dbReference type="PeptideAtlas" id="Q9SH40"/>
<dbReference type="Araport" id="AT1G63560"/>
<dbReference type="TAIR" id="AT1G63560"/>
<dbReference type="HOGENOM" id="CLU_000288_35_0_1"/>
<dbReference type="InParanoid" id="Q9SH40"/>
<dbReference type="PhylomeDB" id="Q9SH40"/>
<dbReference type="PRO" id="PR:Q9SH40"/>
<dbReference type="Proteomes" id="UP000006548">
    <property type="component" value="Chromosome 1"/>
</dbReference>
<dbReference type="ExpressionAtlas" id="Q9SH40">
    <property type="expression patterns" value="baseline and differential"/>
</dbReference>
<dbReference type="GO" id="GO:0005576">
    <property type="term" value="C:extracellular region"/>
    <property type="evidence" value="ECO:0007669"/>
    <property type="project" value="UniProtKB-SubCell"/>
</dbReference>
<dbReference type="CDD" id="cd23509">
    <property type="entry name" value="Gnk2-like"/>
    <property type="match status" value="2"/>
</dbReference>
<dbReference type="FunFam" id="3.30.430.20:FF:000003">
    <property type="entry name" value="Cysteine-rich RLK (RECEPTOR-like protein kinase) 10"/>
    <property type="match status" value="1"/>
</dbReference>
<dbReference type="Gene3D" id="3.30.430.20">
    <property type="entry name" value="Gnk2 domain, C-X8-C-X2-C motif"/>
    <property type="match status" value="2"/>
</dbReference>
<dbReference type="InterPro" id="IPR002902">
    <property type="entry name" value="GNK2"/>
</dbReference>
<dbReference type="InterPro" id="IPR038408">
    <property type="entry name" value="GNK2_sf"/>
</dbReference>
<dbReference type="PANTHER" id="PTHR32099">
    <property type="entry name" value="CYSTEINE-RICH REPEAT SECRETORY PROTEIN"/>
    <property type="match status" value="1"/>
</dbReference>
<dbReference type="PANTHER" id="PTHR32099:SF29">
    <property type="entry name" value="CYSTEINE-RICH REPEAT SECRETORY PROTEIN 8"/>
    <property type="match status" value="1"/>
</dbReference>
<dbReference type="Pfam" id="PF01657">
    <property type="entry name" value="Stress-antifung"/>
    <property type="match status" value="2"/>
</dbReference>
<dbReference type="PROSITE" id="PS51473">
    <property type="entry name" value="GNK2"/>
    <property type="match status" value="2"/>
</dbReference>
<keyword id="KW-1185">Reference proteome</keyword>
<keyword id="KW-0677">Repeat</keyword>
<keyword id="KW-0964">Secreted</keyword>
<keyword id="KW-0732">Signal</keyword>
<accession>Q9SH40</accession>
<accession>F4I3N0</accession>
<accession>Q6NPE1</accession>